<protein>
    <recommendedName>
        <fullName evidence="2">NADH-quinone oxidoreductase subunit C/D</fullName>
        <ecNumber evidence="2">7.1.1.-</ecNumber>
    </recommendedName>
    <alternativeName>
        <fullName evidence="2">NADH dehydrogenase I subunit C/D</fullName>
    </alternativeName>
    <alternativeName>
        <fullName evidence="2">NDH-1 subunit C/D</fullName>
    </alternativeName>
</protein>
<organism>
    <name type="scientific">Bacteroides fragilis (strain ATCC 25285 / DSM 2151 / CCUG 4856 / JCM 11019 / LMG 10263 / NCTC 9343 / Onslow / VPI 2553 / EN-2)</name>
    <dbReference type="NCBI Taxonomy" id="272559"/>
    <lineage>
        <taxon>Bacteria</taxon>
        <taxon>Pseudomonadati</taxon>
        <taxon>Bacteroidota</taxon>
        <taxon>Bacteroidia</taxon>
        <taxon>Bacteroidales</taxon>
        <taxon>Bacteroidaceae</taxon>
        <taxon>Bacteroides</taxon>
    </lineage>
</organism>
<reference key="1">
    <citation type="journal article" date="2005" name="Science">
        <title>Extensive DNA inversions in the B. fragilis genome control variable gene expression.</title>
        <authorList>
            <person name="Cerdeno-Tarraga A.-M."/>
            <person name="Patrick S."/>
            <person name="Crossman L.C."/>
            <person name="Blakely G."/>
            <person name="Abratt V."/>
            <person name="Lennard N."/>
            <person name="Poxton I."/>
            <person name="Duerden B."/>
            <person name="Harris B."/>
            <person name="Quail M.A."/>
            <person name="Barron A."/>
            <person name="Clark L."/>
            <person name="Corton C."/>
            <person name="Doggett J."/>
            <person name="Holden M.T.G."/>
            <person name="Larke N."/>
            <person name="Line A."/>
            <person name="Lord A."/>
            <person name="Norbertczak H."/>
            <person name="Ormond D."/>
            <person name="Price C."/>
            <person name="Rabbinowitsch E."/>
            <person name="Woodward J."/>
            <person name="Barrell B.G."/>
            <person name="Parkhill J."/>
        </authorList>
    </citation>
    <scope>NUCLEOTIDE SEQUENCE [LARGE SCALE GENOMIC DNA]</scope>
    <source>
        <strain>ATCC 25285 / DSM 2151 / CCUG 4856 / JCM 11019 / LMG 10263 / NCTC 9343 / Onslow / VPI 2553 / EN-2</strain>
    </source>
</reference>
<keyword id="KW-0997">Cell inner membrane</keyword>
<keyword id="KW-1003">Cell membrane</keyword>
<keyword id="KW-0472">Membrane</keyword>
<keyword id="KW-0511">Multifunctional enzyme</keyword>
<keyword id="KW-0520">NAD</keyword>
<keyword id="KW-0874">Quinone</keyword>
<keyword id="KW-1278">Translocase</keyword>
<keyword id="KW-0813">Transport</keyword>
<proteinExistence type="inferred from homology"/>
<name>NUOCD_BACFN</name>
<feature type="chain" id="PRO_0000358617" description="NADH-quinone oxidoreductase subunit C/D">
    <location>
        <begin position="1"/>
        <end position="530"/>
    </location>
</feature>
<feature type="region of interest" description="NADH dehydrogenase I subunit C" evidence="2">
    <location>
        <begin position="1"/>
        <end position="144"/>
    </location>
</feature>
<feature type="region of interest" description="NADH dehydrogenase I subunit D" evidence="2">
    <location>
        <begin position="171"/>
        <end position="530"/>
    </location>
</feature>
<gene>
    <name evidence="2" type="primary">nuoC</name>
    <name type="synonym">nuoCD</name>
    <name type="synonym">nuoD</name>
    <name type="ordered locus">BF0790</name>
</gene>
<dbReference type="EC" id="7.1.1.-" evidence="2"/>
<dbReference type="EMBL" id="CR626927">
    <property type="protein sequence ID" value="CAH06536.1"/>
    <property type="molecule type" value="Genomic_DNA"/>
</dbReference>
<dbReference type="RefSeq" id="WP_005785050.1">
    <property type="nucleotide sequence ID" value="NZ_UFTH01000001.1"/>
</dbReference>
<dbReference type="SMR" id="Q5LH50"/>
<dbReference type="PaxDb" id="272559-BF9343_0755"/>
<dbReference type="KEGG" id="bfs:BF9343_0755"/>
<dbReference type="eggNOG" id="COG0649">
    <property type="taxonomic scope" value="Bacteria"/>
</dbReference>
<dbReference type="eggNOG" id="COG0852">
    <property type="taxonomic scope" value="Bacteria"/>
</dbReference>
<dbReference type="HOGENOM" id="CLU_015134_3_2_10"/>
<dbReference type="Proteomes" id="UP000006731">
    <property type="component" value="Chromosome"/>
</dbReference>
<dbReference type="GO" id="GO:0030964">
    <property type="term" value="C:NADH dehydrogenase complex"/>
    <property type="evidence" value="ECO:0007669"/>
    <property type="project" value="InterPro"/>
</dbReference>
<dbReference type="GO" id="GO:0005886">
    <property type="term" value="C:plasma membrane"/>
    <property type="evidence" value="ECO:0007669"/>
    <property type="project" value="UniProtKB-SubCell"/>
</dbReference>
<dbReference type="GO" id="GO:0051287">
    <property type="term" value="F:NAD binding"/>
    <property type="evidence" value="ECO:0007669"/>
    <property type="project" value="InterPro"/>
</dbReference>
<dbReference type="GO" id="GO:0008137">
    <property type="term" value="F:NADH dehydrogenase (ubiquinone) activity"/>
    <property type="evidence" value="ECO:0007669"/>
    <property type="project" value="InterPro"/>
</dbReference>
<dbReference type="GO" id="GO:0050136">
    <property type="term" value="F:NADH:ubiquinone reductase (non-electrogenic) activity"/>
    <property type="evidence" value="ECO:0007669"/>
    <property type="project" value="UniProtKB-UniRule"/>
</dbReference>
<dbReference type="GO" id="GO:0048038">
    <property type="term" value="F:quinone binding"/>
    <property type="evidence" value="ECO:0007669"/>
    <property type="project" value="UniProtKB-KW"/>
</dbReference>
<dbReference type="Gene3D" id="1.10.645.10">
    <property type="entry name" value="Cytochrome-c3 Hydrogenase, chain B"/>
    <property type="match status" value="1"/>
</dbReference>
<dbReference type="Gene3D" id="3.30.460.80">
    <property type="entry name" value="NADH:ubiquinone oxidoreductase, 30kDa subunit"/>
    <property type="match status" value="1"/>
</dbReference>
<dbReference type="HAMAP" id="MF_01397">
    <property type="entry name" value="NDH1_NuoCD_2"/>
    <property type="match status" value="1"/>
</dbReference>
<dbReference type="HAMAP" id="MF_01358">
    <property type="entry name" value="NDH1_NuoD"/>
    <property type="match status" value="1"/>
</dbReference>
<dbReference type="InterPro" id="IPR001135">
    <property type="entry name" value="NADH_Q_OxRdtase_suD"/>
</dbReference>
<dbReference type="InterPro" id="IPR037232">
    <property type="entry name" value="NADH_quin_OxRdtase_su_C/D-like"/>
</dbReference>
<dbReference type="InterPro" id="IPR001268">
    <property type="entry name" value="NADH_UbQ_OxRdtase_30kDa_su"/>
</dbReference>
<dbReference type="InterPro" id="IPR020396">
    <property type="entry name" value="NADH_UbQ_OxRdtase_CS"/>
</dbReference>
<dbReference type="InterPro" id="IPR026662">
    <property type="entry name" value="NDH-1_subunit_CD"/>
</dbReference>
<dbReference type="InterPro" id="IPR022885">
    <property type="entry name" value="NDH1_su_D/H"/>
</dbReference>
<dbReference type="InterPro" id="IPR029014">
    <property type="entry name" value="NiFe-Hase_large"/>
</dbReference>
<dbReference type="NCBIfam" id="NF004739">
    <property type="entry name" value="PRK06075.1"/>
    <property type="match status" value="1"/>
</dbReference>
<dbReference type="PANTHER" id="PTHR11993:SF10">
    <property type="entry name" value="NADH DEHYDROGENASE [UBIQUINONE] IRON-SULFUR PROTEIN 2, MITOCHONDRIAL"/>
    <property type="match status" value="1"/>
</dbReference>
<dbReference type="PANTHER" id="PTHR11993">
    <property type="entry name" value="NADH-UBIQUINONE OXIDOREDUCTASE 49 KDA SUBUNIT"/>
    <property type="match status" value="1"/>
</dbReference>
<dbReference type="Pfam" id="PF00329">
    <property type="entry name" value="Complex1_30kDa"/>
    <property type="match status" value="1"/>
</dbReference>
<dbReference type="Pfam" id="PF00346">
    <property type="entry name" value="Complex1_49kDa"/>
    <property type="match status" value="2"/>
</dbReference>
<dbReference type="SUPFAM" id="SSF56762">
    <property type="entry name" value="HydB/Nqo4-like"/>
    <property type="match status" value="1"/>
</dbReference>
<dbReference type="SUPFAM" id="SSF143243">
    <property type="entry name" value="Nqo5-like"/>
    <property type="match status" value="1"/>
</dbReference>
<dbReference type="PROSITE" id="PS00542">
    <property type="entry name" value="COMPLEX1_30K"/>
    <property type="match status" value="1"/>
</dbReference>
<sequence length="530" mass="60557">MEEIKYIEPAALHDEMLRLRNEKQMDFLESLTGMDWGVADEGDAPNVTRGLGVVYHLESTVTGERIAIKTSTNNRETPEIPSVSDIWKAADFNEREVFDYYGIVFIGHPDMRRLYLRNDWVGHPMRKDNNPEKDNPLRMDNEETYDTTREIELNPDGTYQTQENVIFDDREYVVNIGPQHPATHGVMRFRVSLEGETIKKLDANCGYIHRGIEKMNESLTYPQTLALTDRLDYLGAHQNRHALCMCIEKAMGIEVSERVKYIRTIMDELQRIDSHLLFYSCLAMDLGALTAFFYGFRDREMILDMFEETCGGRLIMNYNTIGGVQADLHPNFIPRVKKFIPYLRGIIHEYHDVFTGNVIARQRLKGVGVLSREDAISFGCTGGTGRASGWACDVRKRMPYGVYDKVDFKEIVYTEGDSFARYMVRMDEIMESLNIIEQLIDNIPEGPIQEKMKPIIRVPEGSYYTAVEGSRGEFGVFLESHGDKTPYRLHYRSTGLPLVSAVDTICRGAKIADLIAIGGTLDYVVPDIDR</sequence>
<evidence type="ECO:0000250" key="1"/>
<evidence type="ECO:0000255" key="2">
    <source>
        <dbReference type="HAMAP-Rule" id="MF_01397"/>
    </source>
</evidence>
<accession>Q5LH50</accession>
<comment type="function">
    <text evidence="1">NDH-1 shuttles electrons from NADH, via FMN and iron-sulfur (Fe-S) centers, to quinones in the respiratory chain. The immediate electron acceptor for the enzyme in this species is believed to be a menaquinone. Couples the redox reaction to proton translocation (for every two electrons transferred, four hydrogen ions are translocated across the cytoplasmic membrane), and thus conserves the redox energy in a proton gradient (By similarity).</text>
</comment>
<comment type="catalytic activity">
    <reaction evidence="2">
        <text>a quinone + NADH + 5 H(+)(in) = a quinol + NAD(+) + 4 H(+)(out)</text>
        <dbReference type="Rhea" id="RHEA:57888"/>
        <dbReference type="ChEBI" id="CHEBI:15378"/>
        <dbReference type="ChEBI" id="CHEBI:24646"/>
        <dbReference type="ChEBI" id="CHEBI:57540"/>
        <dbReference type="ChEBI" id="CHEBI:57945"/>
        <dbReference type="ChEBI" id="CHEBI:132124"/>
    </reaction>
</comment>
<comment type="subunit">
    <text evidence="2">NDH-1 is composed of 13 different subunits. Subunits NuoB, CD, E, F, and G constitute the peripheral sector of the complex.</text>
</comment>
<comment type="subcellular location">
    <subcellularLocation>
        <location evidence="2">Cell inner membrane</location>
        <topology evidence="2">Peripheral membrane protein</topology>
        <orientation evidence="1">Cytoplasmic side</orientation>
    </subcellularLocation>
</comment>
<comment type="similarity">
    <text evidence="2">In the N-terminal section; belongs to the complex I 30 kDa subunit family.</text>
</comment>
<comment type="similarity">
    <text evidence="2">In the C-terminal section; belongs to the complex I 49 kDa subunit family.</text>
</comment>